<dbReference type="EC" id="3.6.4.12"/>
<dbReference type="EMBL" id="AJ867218">
    <property type="protein sequence ID" value="CAI29793.1"/>
    <property type="molecule type" value="Genomic_DNA"/>
</dbReference>
<dbReference type="EMBL" id="BC095919">
    <property type="protein sequence ID" value="AAH95919.1"/>
    <property type="molecule type" value="mRNA"/>
</dbReference>
<dbReference type="RefSeq" id="NP_001089437.1">
    <property type="nucleotide sequence ID" value="NM_001095968.1"/>
</dbReference>
<dbReference type="SMR" id="Q5F310"/>
<dbReference type="BioGRID" id="592268">
    <property type="interactions" value="3"/>
</dbReference>
<dbReference type="IntAct" id="Q5F310">
    <property type="interactions" value="1"/>
</dbReference>
<dbReference type="GeneID" id="734487"/>
<dbReference type="KEGG" id="xla:734487"/>
<dbReference type="AGR" id="Xenbase:XB-GENE-961378"/>
<dbReference type="CTD" id="734487"/>
<dbReference type="Xenbase" id="XB-GENE-961378">
    <property type="gene designation" value="mcm8.L"/>
</dbReference>
<dbReference type="OrthoDB" id="422555at2759"/>
<dbReference type="Proteomes" id="UP000186698">
    <property type="component" value="Chromosome 5L"/>
</dbReference>
<dbReference type="Bgee" id="734487">
    <property type="expression patterns" value="Expressed in testis and 19 other cell types or tissues"/>
</dbReference>
<dbReference type="GO" id="GO:0042555">
    <property type="term" value="C:MCM complex"/>
    <property type="evidence" value="ECO:0000318"/>
    <property type="project" value="GO_Central"/>
</dbReference>
<dbReference type="GO" id="GO:0097362">
    <property type="term" value="C:MCM8-MCM9 complex"/>
    <property type="evidence" value="ECO:0000250"/>
    <property type="project" value="UniProtKB"/>
</dbReference>
<dbReference type="GO" id="GO:0005634">
    <property type="term" value="C:nucleus"/>
    <property type="evidence" value="ECO:0000318"/>
    <property type="project" value="GO_Central"/>
</dbReference>
<dbReference type="GO" id="GO:0005524">
    <property type="term" value="F:ATP binding"/>
    <property type="evidence" value="ECO:0007669"/>
    <property type="project" value="UniProtKB-KW"/>
</dbReference>
<dbReference type="GO" id="GO:0016887">
    <property type="term" value="F:ATP hydrolysis activity"/>
    <property type="evidence" value="ECO:0007669"/>
    <property type="project" value="InterPro"/>
</dbReference>
<dbReference type="GO" id="GO:0003697">
    <property type="term" value="F:single-stranded DNA binding"/>
    <property type="evidence" value="ECO:0000318"/>
    <property type="project" value="GO_Central"/>
</dbReference>
<dbReference type="GO" id="GO:0017116">
    <property type="term" value="F:single-stranded DNA helicase activity"/>
    <property type="evidence" value="ECO:0007669"/>
    <property type="project" value="TreeGrafter"/>
</dbReference>
<dbReference type="GO" id="GO:0006974">
    <property type="term" value="P:DNA damage response"/>
    <property type="evidence" value="ECO:0000250"/>
    <property type="project" value="UniProtKB"/>
</dbReference>
<dbReference type="GO" id="GO:0006260">
    <property type="term" value="P:DNA replication"/>
    <property type="evidence" value="ECO:0007669"/>
    <property type="project" value="UniProtKB-KW"/>
</dbReference>
<dbReference type="GO" id="GO:0000724">
    <property type="term" value="P:double-strand break repair via homologous recombination"/>
    <property type="evidence" value="ECO:0000250"/>
    <property type="project" value="UniProtKB"/>
</dbReference>
<dbReference type="GO" id="GO:0030174">
    <property type="term" value="P:regulation of DNA-templated DNA replication initiation"/>
    <property type="evidence" value="ECO:0007669"/>
    <property type="project" value="UniProtKB-ARBA"/>
</dbReference>
<dbReference type="CDD" id="cd17759">
    <property type="entry name" value="MCM8"/>
    <property type="match status" value="1"/>
</dbReference>
<dbReference type="CDD" id="cd22247">
    <property type="entry name" value="MCM8_WHD"/>
    <property type="match status" value="1"/>
</dbReference>
<dbReference type="FunFam" id="2.20.28.10:FF:000007">
    <property type="entry name" value="DNA helicase MCM8 isoform X1"/>
    <property type="match status" value="1"/>
</dbReference>
<dbReference type="FunFam" id="2.40.50.140:FF:000487">
    <property type="entry name" value="Minichromosome maintenance 8 homologous recombination repair factor"/>
    <property type="match status" value="1"/>
</dbReference>
<dbReference type="Gene3D" id="2.20.28.10">
    <property type="match status" value="1"/>
</dbReference>
<dbReference type="Gene3D" id="2.40.50.140">
    <property type="entry name" value="Nucleic acid-binding proteins"/>
    <property type="match status" value="1"/>
</dbReference>
<dbReference type="Gene3D" id="3.40.50.300">
    <property type="entry name" value="P-loop containing nucleotide triphosphate hydrolases"/>
    <property type="match status" value="1"/>
</dbReference>
<dbReference type="InterPro" id="IPR003593">
    <property type="entry name" value="AAA+_ATPase"/>
</dbReference>
<dbReference type="InterPro" id="IPR031327">
    <property type="entry name" value="MCM"/>
</dbReference>
<dbReference type="InterPro" id="IPR056875">
    <property type="entry name" value="MCM8/REC_WHD"/>
</dbReference>
<dbReference type="InterPro" id="IPR001208">
    <property type="entry name" value="MCM_dom"/>
</dbReference>
<dbReference type="InterPro" id="IPR041562">
    <property type="entry name" value="MCM_lid"/>
</dbReference>
<dbReference type="InterPro" id="IPR033762">
    <property type="entry name" value="MCM_OB"/>
</dbReference>
<dbReference type="InterPro" id="IPR012340">
    <property type="entry name" value="NA-bd_OB-fold"/>
</dbReference>
<dbReference type="InterPro" id="IPR027417">
    <property type="entry name" value="P-loop_NTPase"/>
</dbReference>
<dbReference type="PANTHER" id="PTHR11630:SF47">
    <property type="entry name" value="DNA HELICASE MCM8"/>
    <property type="match status" value="1"/>
</dbReference>
<dbReference type="PANTHER" id="PTHR11630">
    <property type="entry name" value="DNA REPLICATION LICENSING FACTOR MCM FAMILY MEMBER"/>
    <property type="match status" value="1"/>
</dbReference>
<dbReference type="Pfam" id="PF00493">
    <property type="entry name" value="MCM"/>
    <property type="match status" value="1"/>
</dbReference>
<dbReference type="Pfam" id="PF17855">
    <property type="entry name" value="MCM_lid"/>
    <property type="match status" value="1"/>
</dbReference>
<dbReference type="Pfam" id="PF17207">
    <property type="entry name" value="MCM_OB"/>
    <property type="match status" value="1"/>
</dbReference>
<dbReference type="Pfam" id="PF25051">
    <property type="entry name" value="WHD_MCM8"/>
    <property type="match status" value="1"/>
</dbReference>
<dbReference type="PRINTS" id="PR01657">
    <property type="entry name" value="MCMFAMILY"/>
</dbReference>
<dbReference type="SMART" id="SM00382">
    <property type="entry name" value="AAA"/>
    <property type="match status" value="1"/>
</dbReference>
<dbReference type="SMART" id="SM00350">
    <property type="entry name" value="MCM"/>
    <property type="match status" value="1"/>
</dbReference>
<dbReference type="SUPFAM" id="SSF50249">
    <property type="entry name" value="Nucleic acid-binding proteins"/>
    <property type="match status" value="1"/>
</dbReference>
<dbReference type="SUPFAM" id="SSF52540">
    <property type="entry name" value="P-loop containing nucleoside triphosphate hydrolases"/>
    <property type="match status" value="1"/>
</dbReference>
<dbReference type="PROSITE" id="PS50051">
    <property type="entry name" value="MCM_2"/>
    <property type="match status" value="1"/>
</dbReference>
<feature type="chain" id="PRO_0000419473" description="DNA helicase MCM8">
    <location>
        <begin position="1"/>
        <end position="831"/>
    </location>
</feature>
<feature type="domain" description="MCM">
    <location>
        <begin position="395"/>
        <end position="602"/>
    </location>
</feature>
<feature type="region of interest" description="Disordered" evidence="3">
    <location>
        <begin position="1"/>
        <end position="53"/>
    </location>
</feature>
<feature type="compositionally biased region" description="Gly residues" evidence="3">
    <location>
        <begin position="1"/>
        <end position="20"/>
    </location>
</feature>
<feature type="binding site" evidence="2">
    <location>
        <begin position="447"/>
        <end position="454"/>
    </location>
    <ligand>
        <name>ATP</name>
        <dbReference type="ChEBI" id="CHEBI:30616"/>
    </ligand>
</feature>
<feature type="sequence conflict" description="In Ref. 1; CAI29793." evidence="5" ref="1">
    <original>R</original>
    <variation>RGG</variation>
    <location>
        <position position="13"/>
    </location>
</feature>
<feature type="sequence conflict" description="In Ref. 1; CAI29793." evidence="5" ref="1">
    <original>A</original>
    <variation>S</variation>
    <location>
        <position position="130"/>
    </location>
</feature>
<feature type="sequence conflict" description="In Ref. 1; CAI29793." evidence="5" ref="1">
    <original>K</original>
    <variation>KL</variation>
    <location>
        <position position="643"/>
    </location>
</feature>
<organism>
    <name type="scientific">Xenopus laevis</name>
    <name type="common">African clawed frog</name>
    <dbReference type="NCBI Taxonomy" id="8355"/>
    <lineage>
        <taxon>Eukaryota</taxon>
        <taxon>Metazoa</taxon>
        <taxon>Chordata</taxon>
        <taxon>Craniata</taxon>
        <taxon>Vertebrata</taxon>
        <taxon>Euteleostomi</taxon>
        <taxon>Amphibia</taxon>
        <taxon>Batrachia</taxon>
        <taxon>Anura</taxon>
        <taxon>Pipoidea</taxon>
        <taxon>Pipidae</taxon>
        <taxon>Xenopodinae</taxon>
        <taxon>Xenopus</taxon>
        <taxon>Xenopus</taxon>
    </lineage>
</organism>
<accession>Q5F310</accession>
<accession>Q501Q5</accession>
<comment type="function">
    <text evidence="1 4">Component of the MCM8-MCM9 complex, a complex involved in homologous recombination repair following DNA interstrand cross-links and plays a key role during gametogenesis. The MCM8-MCM9 complex probably acts as a hexameric helicase required to process aberrant forks into homologous recombination substrates and to orchestrate homologous recombination with resection, fork stabilization and fork restart (By similarity). In eggs, required for elongation during DNA replication by facilitating the recruitment of rpa2/rpa34 and stimulating the processivity of DNA polymerases at replication foci. Probably not required for DNA replication in other cells.</text>
</comment>
<comment type="catalytic activity">
    <reaction>
        <text>ATP + H2O = ADP + phosphate + H(+)</text>
        <dbReference type="Rhea" id="RHEA:13065"/>
        <dbReference type="ChEBI" id="CHEBI:15377"/>
        <dbReference type="ChEBI" id="CHEBI:15378"/>
        <dbReference type="ChEBI" id="CHEBI:30616"/>
        <dbReference type="ChEBI" id="CHEBI:43474"/>
        <dbReference type="ChEBI" id="CHEBI:456216"/>
        <dbReference type="EC" id="3.6.4.12"/>
    </reaction>
</comment>
<comment type="subunit">
    <text evidence="1">Component of the MCM8-MCM9 complex, which forms a hexamer composed of mcm8 and mcm9.</text>
</comment>
<comment type="subcellular location">
    <subcellularLocation>
        <location evidence="1">Nucleus</location>
    </subcellularLocation>
    <text evidence="1">Localizes to nuclear foci and colocalizes with rad51.</text>
</comment>
<comment type="similarity">
    <text evidence="5">Belongs to the MCM family.</text>
</comment>
<sequence length="831" mass="92300">MSQGWRGGSGGWRGGGGGNPYAGAWRGRPWRGRGQGGTWSRNNGRDPVCFAPPKPQLTQTTLDKYIPYKGWKLYFSEAYSDNSPFLEKVRAFEKFFKKQIELYDKDEIERKGSILVDYKELLQDEDLSAAIPLSSELKDMPEKVLECMGLAIHQVLTKDLETHAADLQQQEGLRTEEAPIVNVPFIHARVFNYDTLTSLKNLRASLYGKYVALRGTVVRVGNIKPLCTKMAFSCNMCGDIQCFPLPDGKYTVPTKCPVPECRGRSFTANRSSPLTVTVDWQTIKVQELMSDDQREAGRIPRTVECELIQDLVDSCVPGDMITVTGIVKVSNTRDGGFKNKNNKCMFLLYIEANSVSNSKGQKGKSTEDSGNHGASMDFSLKDLYAIQEIQSQENLFQLIVNSLCPTIYGHELVKAGLSLALFGGCQKYADDKNRIPIRGDPHILVVGDPGLGKSQMLQAVCNVAPRGVYVCGNTTTTSGLTVTLSRDTTTGDFGLEAGALVLGDQGICGIDEFDKMGNQHQALLEAMEQQSISLAKAGIVCSLPARTSIIAAANPVGGHYNKGKTVSENLKMGSALLSRFDLVFILVDTPNEDHDHLLSEHVMAMRSGAKEIQSVDITRINTQNSNTSILEVPSERPLGERLKRTGEHFDALPHQLLRKFVGYARQYVHPSLSPDAAQILQDFYLELRKQNQGIDSTPITTRQLESLIRLTEARARLELREKATKEDAEEVVQIMKYSLLGTFSDEFGKLDFQRSQHGSGMSNRSKAKKFVSALNRVAEQTYNNLFEFQQLRQIARELQIQVIDFEAFIGSLNDQGYLLKKGPRVFQLQTM</sequence>
<proteinExistence type="evidence at transcript level"/>
<protein>
    <recommendedName>
        <fullName>DNA helicase MCM8</fullName>
        <ecNumber>3.6.4.12</ecNumber>
    </recommendedName>
    <alternativeName>
        <fullName>Minichromosome maintenance 8</fullName>
    </alternativeName>
</protein>
<reference key="1">
    <citation type="journal article" date="2005" name="Cell">
        <title>MCM8 is an MCM2-7-related protein that functions as a DNA helicase during replication elongation and not initiation.</title>
        <authorList>
            <person name="Maiorano D."/>
            <person name="Cuvier O."/>
            <person name="Danis E."/>
            <person name="Mechali M."/>
        </authorList>
    </citation>
    <scope>NUCLEOTIDE SEQUENCE [GENOMIC DNA]</scope>
    <scope>FUNCTION</scope>
    <source>
        <tissue>Embryo</tissue>
    </source>
</reference>
<reference key="2">
    <citation type="submission" date="2005-05" db="EMBL/GenBank/DDBJ databases">
        <authorList>
            <consortium name="NIH - Xenopus Gene Collection (XGC) project"/>
        </authorList>
    </citation>
    <scope>NUCLEOTIDE SEQUENCE [LARGE SCALE MRNA]</scope>
    <source>
        <tissue>Testis</tissue>
    </source>
</reference>
<name>MCM8_XENLA</name>
<keyword id="KW-0067">ATP-binding</keyword>
<keyword id="KW-0131">Cell cycle</keyword>
<keyword id="KW-0227">DNA damage</keyword>
<keyword id="KW-0234">DNA repair</keyword>
<keyword id="KW-0235">DNA replication</keyword>
<keyword id="KW-0238">DNA-binding</keyword>
<keyword id="KW-0347">Helicase</keyword>
<keyword id="KW-0378">Hydrolase</keyword>
<keyword id="KW-0547">Nucleotide-binding</keyword>
<keyword id="KW-0539">Nucleus</keyword>
<keyword id="KW-1185">Reference proteome</keyword>
<evidence type="ECO:0000250" key="1"/>
<evidence type="ECO:0000255" key="2"/>
<evidence type="ECO:0000256" key="3">
    <source>
        <dbReference type="SAM" id="MobiDB-lite"/>
    </source>
</evidence>
<evidence type="ECO:0000269" key="4">
    <source>
    </source>
</evidence>
<evidence type="ECO:0000305" key="5"/>
<gene>
    <name type="primary">mcm8</name>
</gene>